<proteinExistence type="inferred from homology"/>
<comment type="function">
    <text evidence="1">Catalyzes the NAD(P)-dependent oxidation of 4-(phosphooxy)-L-threonine (HTP) into 2-amino-3-oxo-4-(phosphooxy)butyric acid which spontaneously decarboxylates to form 3-amino-2-oxopropyl phosphate (AHAP).</text>
</comment>
<comment type="catalytic activity">
    <reaction evidence="1">
        <text>4-(phosphooxy)-L-threonine + NAD(+) = 3-amino-2-oxopropyl phosphate + CO2 + NADH</text>
        <dbReference type="Rhea" id="RHEA:32275"/>
        <dbReference type="ChEBI" id="CHEBI:16526"/>
        <dbReference type="ChEBI" id="CHEBI:57279"/>
        <dbReference type="ChEBI" id="CHEBI:57540"/>
        <dbReference type="ChEBI" id="CHEBI:57945"/>
        <dbReference type="ChEBI" id="CHEBI:58452"/>
        <dbReference type="EC" id="1.1.1.262"/>
    </reaction>
</comment>
<comment type="cofactor">
    <cofactor evidence="1">
        <name>a divalent metal cation</name>
        <dbReference type="ChEBI" id="CHEBI:60240"/>
    </cofactor>
    <text evidence="1">Binds 1 divalent metal cation per subunit.</text>
</comment>
<comment type="pathway">
    <text evidence="1">Cofactor biosynthesis; pyridoxine 5'-phosphate biosynthesis; pyridoxine 5'-phosphate from D-erythrose 4-phosphate: step 4/5.</text>
</comment>
<comment type="subunit">
    <text evidence="1">Homodimer.</text>
</comment>
<comment type="subcellular location">
    <subcellularLocation>
        <location evidence="1">Cytoplasm</location>
    </subcellularLocation>
</comment>
<comment type="miscellaneous">
    <text evidence="1">The active site is located at the dimer interface.</text>
</comment>
<comment type="similarity">
    <text evidence="2">Belongs to the PdxA family.</text>
</comment>
<gene>
    <name evidence="1" type="primary">pdxA</name>
    <name type="ordered locus">HY04AAS1_0974</name>
</gene>
<feature type="chain" id="PRO_1000146489" description="4-hydroxythreonine-4-phosphate dehydrogenase">
    <location>
        <begin position="1"/>
        <end position="310"/>
    </location>
</feature>
<feature type="binding site" evidence="1">
    <location>
        <position position="129"/>
    </location>
    <ligand>
        <name>substrate</name>
    </ligand>
</feature>
<feature type="binding site" evidence="1">
    <location>
        <position position="158"/>
    </location>
    <ligand>
        <name>a divalent metal cation</name>
        <dbReference type="ChEBI" id="CHEBI:60240"/>
        <note>ligand shared between dimeric partners</note>
    </ligand>
</feature>
<feature type="binding site" evidence="1">
    <location>
        <position position="202"/>
    </location>
    <ligand>
        <name>a divalent metal cation</name>
        <dbReference type="ChEBI" id="CHEBI:60240"/>
        <note>ligand shared between dimeric partners</note>
    </ligand>
</feature>
<feature type="binding site" evidence="1">
    <location>
        <position position="250"/>
    </location>
    <ligand>
        <name>a divalent metal cation</name>
        <dbReference type="ChEBI" id="CHEBI:60240"/>
        <note>ligand shared between dimeric partners</note>
    </ligand>
</feature>
<feature type="binding site" evidence="1">
    <location>
        <position position="258"/>
    </location>
    <ligand>
        <name>substrate</name>
    </ligand>
</feature>
<feature type="binding site" evidence="1">
    <location>
        <position position="267"/>
    </location>
    <ligand>
        <name>substrate</name>
    </ligand>
</feature>
<feature type="binding site" evidence="1">
    <location>
        <position position="276"/>
    </location>
    <ligand>
        <name>substrate</name>
    </ligand>
</feature>
<keyword id="KW-0963">Cytoplasm</keyword>
<keyword id="KW-0479">Metal-binding</keyword>
<keyword id="KW-0520">NAD</keyword>
<keyword id="KW-0521">NADP</keyword>
<keyword id="KW-0560">Oxidoreductase</keyword>
<keyword id="KW-0664">Pyridoxine biosynthesis</keyword>
<evidence type="ECO:0000250" key="1">
    <source>
        <dbReference type="UniProtKB" id="P19624"/>
    </source>
</evidence>
<evidence type="ECO:0000305" key="2"/>
<sequence length="310" mass="34242">MKIFGITMGDPAGIGPELILKLQKDMEDENAYVIYGEEYILKHASSVLGQNFYYEKVNSVDDVKDKGIYLISLSLKGALEPSPSSGKLAIAYLARATADAISKKLNGILTMPINKYFAKASGFSFNGQTEYLAFADNKKDFAMMMYSDAIKVVLATIHIPLKDIANAINVELIKQKIKLIKDYIPKYFRFIPTIKVLGLNPHAGEGGLIGDEEAKIIIPAIRDEDVVGPIPPDTAFIDIKKDDIFLCMYHDQGLIPFKMLAFDKGSNVTIGLSFLRTSPDHGTAYDIAYKGLARVDSAGYSLELLKRYGY</sequence>
<name>PDXA_HYDS0</name>
<reference key="1">
    <citation type="journal article" date="2009" name="J. Bacteriol.">
        <title>Complete and draft genome sequences of six members of the Aquificales.</title>
        <authorList>
            <person name="Reysenbach A.-L."/>
            <person name="Hamamura N."/>
            <person name="Podar M."/>
            <person name="Griffiths E."/>
            <person name="Ferreira S."/>
            <person name="Hochstein R."/>
            <person name="Heidelberg J."/>
            <person name="Johnson J."/>
            <person name="Mead D."/>
            <person name="Pohorille A."/>
            <person name="Sarmiento M."/>
            <person name="Schweighofer K."/>
            <person name="Seshadri R."/>
            <person name="Voytek M.A."/>
        </authorList>
    </citation>
    <scope>NUCLEOTIDE SEQUENCE [LARGE SCALE GENOMIC DNA]</scope>
    <source>
        <strain>Y04AAS1</strain>
    </source>
</reference>
<protein>
    <recommendedName>
        <fullName evidence="1">4-hydroxythreonine-4-phosphate dehydrogenase</fullName>
        <ecNumber evidence="1">1.1.1.262</ecNumber>
    </recommendedName>
    <alternativeName>
        <fullName evidence="1">4-(phosphohydroxy)-L-threonine dehydrogenase</fullName>
    </alternativeName>
</protein>
<dbReference type="EC" id="1.1.1.262" evidence="1"/>
<dbReference type="EMBL" id="CP001130">
    <property type="protein sequence ID" value="ACG57661.1"/>
    <property type="molecule type" value="Genomic_DNA"/>
</dbReference>
<dbReference type="RefSeq" id="WP_012514017.1">
    <property type="nucleotide sequence ID" value="NC_011126.1"/>
</dbReference>
<dbReference type="SMR" id="B4U950"/>
<dbReference type="STRING" id="380749.HY04AAS1_0974"/>
<dbReference type="KEGG" id="hya:HY04AAS1_0974"/>
<dbReference type="eggNOG" id="COG1995">
    <property type="taxonomic scope" value="Bacteria"/>
</dbReference>
<dbReference type="HOGENOM" id="CLU_040168_0_0_0"/>
<dbReference type="OrthoDB" id="9801783at2"/>
<dbReference type="UniPathway" id="UPA00244">
    <property type="reaction ID" value="UER00312"/>
</dbReference>
<dbReference type="GO" id="GO:0005737">
    <property type="term" value="C:cytoplasm"/>
    <property type="evidence" value="ECO:0007669"/>
    <property type="project" value="UniProtKB-SubCell"/>
</dbReference>
<dbReference type="GO" id="GO:0050570">
    <property type="term" value="F:4-hydroxythreonine-4-phosphate dehydrogenase activity"/>
    <property type="evidence" value="ECO:0007669"/>
    <property type="project" value="UniProtKB-EC"/>
</dbReference>
<dbReference type="GO" id="GO:0046872">
    <property type="term" value="F:metal ion binding"/>
    <property type="evidence" value="ECO:0007669"/>
    <property type="project" value="UniProtKB-KW"/>
</dbReference>
<dbReference type="GO" id="GO:0051287">
    <property type="term" value="F:NAD binding"/>
    <property type="evidence" value="ECO:0007669"/>
    <property type="project" value="InterPro"/>
</dbReference>
<dbReference type="GO" id="GO:0008615">
    <property type="term" value="P:pyridoxine biosynthetic process"/>
    <property type="evidence" value="ECO:0007669"/>
    <property type="project" value="UniProtKB-KW"/>
</dbReference>
<dbReference type="Gene3D" id="3.40.718.10">
    <property type="entry name" value="Isopropylmalate Dehydrogenase"/>
    <property type="match status" value="1"/>
</dbReference>
<dbReference type="InterPro" id="IPR005255">
    <property type="entry name" value="PdxA_fam"/>
</dbReference>
<dbReference type="NCBIfam" id="TIGR00557">
    <property type="entry name" value="pdxA"/>
    <property type="match status" value="1"/>
</dbReference>
<dbReference type="PANTHER" id="PTHR30004">
    <property type="entry name" value="4-HYDROXYTHREONINE-4-PHOSPHATE DEHYDROGENASE"/>
    <property type="match status" value="1"/>
</dbReference>
<dbReference type="PANTHER" id="PTHR30004:SF6">
    <property type="entry name" value="D-THREONATE 4-PHOSPHATE DEHYDROGENASE"/>
    <property type="match status" value="1"/>
</dbReference>
<dbReference type="Pfam" id="PF04166">
    <property type="entry name" value="PdxA"/>
    <property type="match status" value="1"/>
</dbReference>
<dbReference type="SUPFAM" id="SSF53659">
    <property type="entry name" value="Isocitrate/Isopropylmalate dehydrogenase-like"/>
    <property type="match status" value="1"/>
</dbReference>
<accession>B4U950</accession>
<organism>
    <name type="scientific">Hydrogenobaculum sp. (strain Y04AAS1)</name>
    <dbReference type="NCBI Taxonomy" id="380749"/>
    <lineage>
        <taxon>Bacteria</taxon>
        <taxon>Pseudomonadati</taxon>
        <taxon>Aquificota</taxon>
        <taxon>Aquificia</taxon>
        <taxon>Aquificales</taxon>
        <taxon>Aquificaceae</taxon>
        <taxon>Hydrogenobaculum</taxon>
    </lineage>
</organism>